<organism>
    <name type="scientific">Rhodopseudomonas palustris (strain HaA2)</name>
    <dbReference type="NCBI Taxonomy" id="316058"/>
    <lineage>
        <taxon>Bacteria</taxon>
        <taxon>Pseudomonadati</taxon>
        <taxon>Pseudomonadota</taxon>
        <taxon>Alphaproteobacteria</taxon>
        <taxon>Hyphomicrobiales</taxon>
        <taxon>Nitrobacteraceae</taxon>
        <taxon>Rhodopseudomonas</taxon>
    </lineage>
</organism>
<protein>
    <recommendedName>
        <fullName evidence="1">Succinyl-diaminopimelate desuccinylase</fullName>
        <shortName evidence="1">SDAP desuccinylase</shortName>
        <ecNumber evidence="1">3.5.1.18</ecNumber>
    </recommendedName>
    <alternativeName>
        <fullName evidence="1">N-succinyl-LL-2,6-diaminoheptanedioate amidohydrolase</fullName>
    </alternativeName>
</protein>
<comment type="function">
    <text evidence="1">Catalyzes the hydrolysis of N-succinyl-L,L-diaminopimelic acid (SDAP), forming succinate and LL-2,6-diaminopimelate (DAP), an intermediate involved in the bacterial biosynthesis of lysine and meso-diaminopimelic acid, an essential component of bacterial cell walls.</text>
</comment>
<comment type="catalytic activity">
    <reaction evidence="1">
        <text>N-succinyl-(2S,6S)-2,6-diaminopimelate + H2O = (2S,6S)-2,6-diaminopimelate + succinate</text>
        <dbReference type="Rhea" id="RHEA:22608"/>
        <dbReference type="ChEBI" id="CHEBI:15377"/>
        <dbReference type="ChEBI" id="CHEBI:30031"/>
        <dbReference type="ChEBI" id="CHEBI:57609"/>
        <dbReference type="ChEBI" id="CHEBI:58087"/>
        <dbReference type="EC" id="3.5.1.18"/>
    </reaction>
</comment>
<comment type="cofactor">
    <cofactor evidence="1">
        <name>Zn(2+)</name>
        <dbReference type="ChEBI" id="CHEBI:29105"/>
    </cofactor>
    <cofactor evidence="1">
        <name>Co(2+)</name>
        <dbReference type="ChEBI" id="CHEBI:48828"/>
    </cofactor>
    <text evidence="1">Binds 2 Zn(2+) or Co(2+) ions per subunit.</text>
</comment>
<comment type="pathway">
    <text evidence="1">Amino-acid biosynthesis; L-lysine biosynthesis via DAP pathway; LL-2,6-diaminopimelate from (S)-tetrahydrodipicolinate (succinylase route): step 3/3.</text>
</comment>
<comment type="subunit">
    <text evidence="1">Homodimer.</text>
</comment>
<comment type="similarity">
    <text evidence="1">Belongs to the peptidase M20A family. DapE subfamily.</text>
</comment>
<sequence>MTATALEIAQALLRCPSVTPADAGALGVLEALLQDAGFATHRVTFSEPGTADIDNLYARIGDGAPHLCFAGHTDVVPPGEETAWSHGAFAGDVEGGLLYGRGAVDMKGGIACAVAATLDYLAANGGQPQQSGKGSISFLITGDEEDVAVNGTVKLLQWAAERGERFDHCIVGEPSNVEAIGDTIKIGRRGSQSGVLIVDGRQGHVAYPHRASNPIPDIATLITALNDEPLDQGSAQFQPSNLEFTSVDVGNPATNVIPAQARAKFNIRFNDHHTQETLRALVEQRLAAACGNRIRARIEWLPSNADVFVTKPGGFTDLVSAAIADITGRSPDLNTGGGTSDARFIAKYCPVVEFGLVGQTMHQIDERTPVSDLDKLTAIYRGVLERYFR</sequence>
<proteinExistence type="inferred from homology"/>
<accession>Q2J2C3</accession>
<dbReference type="EC" id="3.5.1.18" evidence="1"/>
<dbReference type="EMBL" id="CP000250">
    <property type="protein sequence ID" value="ABD05387.1"/>
    <property type="molecule type" value="Genomic_DNA"/>
</dbReference>
<dbReference type="RefSeq" id="WP_011439577.1">
    <property type="nucleotide sequence ID" value="NC_007778.1"/>
</dbReference>
<dbReference type="SMR" id="Q2J2C3"/>
<dbReference type="STRING" id="316058.RPB_0676"/>
<dbReference type="KEGG" id="rpb:RPB_0676"/>
<dbReference type="eggNOG" id="COG0624">
    <property type="taxonomic scope" value="Bacteria"/>
</dbReference>
<dbReference type="HOGENOM" id="CLU_021802_4_0_5"/>
<dbReference type="OrthoDB" id="9809784at2"/>
<dbReference type="UniPathway" id="UPA00034">
    <property type="reaction ID" value="UER00021"/>
</dbReference>
<dbReference type="Proteomes" id="UP000008809">
    <property type="component" value="Chromosome"/>
</dbReference>
<dbReference type="GO" id="GO:0008777">
    <property type="term" value="F:acetylornithine deacetylase activity"/>
    <property type="evidence" value="ECO:0007669"/>
    <property type="project" value="TreeGrafter"/>
</dbReference>
<dbReference type="GO" id="GO:0050897">
    <property type="term" value="F:cobalt ion binding"/>
    <property type="evidence" value="ECO:0007669"/>
    <property type="project" value="UniProtKB-UniRule"/>
</dbReference>
<dbReference type="GO" id="GO:0009014">
    <property type="term" value="F:succinyl-diaminopimelate desuccinylase activity"/>
    <property type="evidence" value="ECO:0007669"/>
    <property type="project" value="UniProtKB-UniRule"/>
</dbReference>
<dbReference type="GO" id="GO:0008270">
    <property type="term" value="F:zinc ion binding"/>
    <property type="evidence" value="ECO:0007669"/>
    <property type="project" value="UniProtKB-UniRule"/>
</dbReference>
<dbReference type="GO" id="GO:0019877">
    <property type="term" value="P:diaminopimelate biosynthetic process"/>
    <property type="evidence" value="ECO:0007669"/>
    <property type="project" value="UniProtKB-UniRule"/>
</dbReference>
<dbReference type="GO" id="GO:0006526">
    <property type="term" value="P:L-arginine biosynthetic process"/>
    <property type="evidence" value="ECO:0007669"/>
    <property type="project" value="TreeGrafter"/>
</dbReference>
<dbReference type="GO" id="GO:0009089">
    <property type="term" value="P:lysine biosynthetic process via diaminopimelate"/>
    <property type="evidence" value="ECO:0007669"/>
    <property type="project" value="UniProtKB-UniRule"/>
</dbReference>
<dbReference type="CDD" id="cd03891">
    <property type="entry name" value="M20_DapE_proteobac"/>
    <property type="match status" value="1"/>
</dbReference>
<dbReference type="Gene3D" id="3.40.630.10">
    <property type="entry name" value="Zn peptidases"/>
    <property type="match status" value="2"/>
</dbReference>
<dbReference type="HAMAP" id="MF_01690">
    <property type="entry name" value="DapE"/>
    <property type="match status" value="1"/>
</dbReference>
<dbReference type="InterPro" id="IPR036264">
    <property type="entry name" value="Bact_exopeptidase_dim_dom"/>
</dbReference>
<dbReference type="InterPro" id="IPR005941">
    <property type="entry name" value="DapE_proteobac"/>
</dbReference>
<dbReference type="InterPro" id="IPR002933">
    <property type="entry name" value="Peptidase_M20"/>
</dbReference>
<dbReference type="InterPro" id="IPR011650">
    <property type="entry name" value="Peptidase_M20_dimer"/>
</dbReference>
<dbReference type="InterPro" id="IPR050072">
    <property type="entry name" value="Peptidase_M20A"/>
</dbReference>
<dbReference type="NCBIfam" id="TIGR01246">
    <property type="entry name" value="dapE_proteo"/>
    <property type="match status" value="1"/>
</dbReference>
<dbReference type="NCBIfam" id="NF009557">
    <property type="entry name" value="PRK13009.1"/>
    <property type="match status" value="1"/>
</dbReference>
<dbReference type="PANTHER" id="PTHR43808">
    <property type="entry name" value="ACETYLORNITHINE DEACETYLASE"/>
    <property type="match status" value="1"/>
</dbReference>
<dbReference type="PANTHER" id="PTHR43808:SF31">
    <property type="entry name" value="N-ACETYL-L-CITRULLINE DEACETYLASE"/>
    <property type="match status" value="1"/>
</dbReference>
<dbReference type="Pfam" id="PF07687">
    <property type="entry name" value="M20_dimer"/>
    <property type="match status" value="1"/>
</dbReference>
<dbReference type="Pfam" id="PF01546">
    <property type="entry name" value="Peptidase_M20"/>
    <property type="match status" value="1"/>
</dbReference>
<dbReference type="SUPFAM" id="SSF55031">
    <property type="entry name" value="Bacterial exopeptidase dimerisation domain"/>
    <property type="match status" value="1"/>
</dbReference>
<dbReference type="SUPFAM" id="SSF53187">
    <property type="entry name" value="Zn-dependent exopeptidases"/>
    <property type="match status" value="1"/>
</dbReference>
<reference key="1">
    <citation type="submission" date="2006-01" db="EMBL/GenBank/DDBJ databases">
        <title>Complete sequence of Rhodopseudomonas palustris HaA2.</title>
        <authorList>
            <consortium name="US DOE Joint Genome Institute"/>
            <person name="Copeland A."/>
            <person name="Lucas S."/>
            <person name="Lapidus A."/>
            <person name="Barry K."/>
            <person name="Detter J.C."/>
            <person name="Glavina T."/>
            <person name="Hammon N."/>
            <person name="Israni S."/>
            <person name="Pitluck S."/>
            <person name="Chain P."/>
            <person name="Malfatti S."/>
            <person name="Shin M."/>
            <person name="Vergez L."/>
            <person name="Schmutz J."/>
            <person name="Larimer F."/>
            <person name="Land M."/>
            <person name="Hauser L."/>
            <person name="Pelletier D.A."/>
            <person name="Kyrpides N."/>
            <person name="Anderson I."/>
            <person name="Oda Y."/>
            <person name="Harwood C.S."/>
            <person name="Richardson P."/>
        </authorList>
    </citation>
    <scope>NUCLEOTIDE SEQUENCE [LARGE SCALE GENOMIC DNA]</scope>
    <source>
        <strain>HaA2</strain>
    </source>
</reference>
<feature type="chain" id="PRO_0000375693" description="Succinyl-diaminopimelate desuccinylase">
    <location>
        <begin position="1"/>
        <end position="389"/>
    </location>
</feature>
<feature type="active site" evidence="1">
    <location>
        <position position="74"/>
    </location>
</feature>
<feature type="active site" description="Proton acceptor" evidence="1">
    <location>
        <position position="144"/>
    </location>
</feature>
<feature type="binding site" evidence="1">
    <location>
        <position position="72"/>
    </location>
    <ligand>
        <name>Zn(2+)</name>
        <dbReference type="ChEBI" id="CHEBI:29105"/>
        <label>1</label>
    </ligand>
</feature>
<feature type="binding site" evidence="1">
    <location>
        <position position="105"/>
    </location>
    <ligand>
        <name>Zn(2+)</name>
        <dbReference type="ChEBI" id="CHEBI:29105"/>
        <label>1</label>
    </ligand>
</feature>
<feature type="binding site" evidence="1">
    <location>
        <position position="105"/>
    </location>
    <ligand>
        <name>Zn(2+)</name>
        <dbReference type="ChEBI" id="CHEBI:29105"/>
        <label>2</label>
    </ligand>
</feature>
<feature type="binding site" evidence="1">
    <location>
        <position position="145"/>
    </location>
    <ligand>
        <name>Zn(2+)</name>
        <dbReference type="ChEBI" id="CHEBI:29105"/>
        <label>2</label>
    </ligand>
</feature>
<feature type="binding site" evidence="1">
    <location>
        <position position="173"/>
    </location>
    <ligand>
        <name>Zn(2+)</name>
        <dbReference type="ChEBI" id="CHEBI:29105"/>
        <label>1</label>
    </ligand>
</feature>
<feature type="binding site" evidence="1">
    <location>
        <position position="362"/>
    </location>
    <ligand>
        <name>Zn(2+)</name>
        <dbReference type="ChEBI" id="CHEBI:29105"/>
        <label>2</label>
    </ligand>
</feature>
<evidence type="ECO:0000255" key="1">
    <source>
        <dbReference type="HAMAP-Rule" id="MF_01690"/>
    </source>
</evidence>
<gene>
    <name evidence="1" type="primary">dapE</name>
    <name type="ordered locus">RPB_0676</name>
</gene>
<name>DAPE_RHOP2</name>
<keyword id="KW-0028">Amino-acid biosynthesis</keyword>
<keyword id="KW-0170">Cobalt</keyword>
<keyword id="KW-0220">Diaminopimelate biosynthesis</keyword>
<keyword id="KW-0378">Hydrolase</keyword>
<keyword id="KW-0457">Lysine biosynthesis</keyword>
<keyword id="KW-0479">Metal-binding</keyword>
<keyword id="KW-1185">Reference proteome</keyword>
<keyword id="KW-0862">Zinc</keyword>